<proteinExistence type="inferred from homology"/>
<keyword id="KW-0687">Ribonucleoprotein</keyword>
<keyword id="KW-0689">Ribosomal protein</keyword>
<accession>B2HUL1</accession>
<gene>
    <name evidence="1" type="primary">rpmF</name>
    <name type="ordered locus">ACICU_00774</name>
</gene>
<name>RL32_ACIBC</name>
<protein>
    <recommendedName>
        <fullName evidence="1">Large ribosomal subunit protein bL32</fullName>
    </recommendedName>
    <alternativeName>
        <fullName evidence="3">50S ribosomal protein L32</fullName>
    </alternativeName>
</protein>
<feature type="chain" id="PRO_1000120073" description="Large ribosomal subunit protein bL32">
    <location>
        <begin position="1"/>
        <end position="61"/>
    </location>
</feature>
<feature type="region of interest" description="Disordered" evidence="2">
    <location>
        <begin position="1"/>
        <end position="44"/>
    </location>
</feature>
<feature type="compositionally biased region" description="Basic residues" evidence="2">
    <location>
        <begin position="7"/>
        <end position="16"/>
    </location>
</feature>
<feature type="compositionally biased region" description="Polar residues" evidence="2">
    <location>
        <begin position="25"/>
        <end position="34"/>
    </location>
</feature>
<evidence type="ECO:0000255" key="1">
    <source>
        <dbReference type="HAMAP-Rule" id="MF_00340"/>
    </source>
</evidence>
<evidence type="ECO:0000256" key="2">
    <source>
        <dbReference type="SAM" id="MobiDB-lite"/>
    </source>
</evidence>
<evidence type="ECO:0000305" key="3"/>
<comment type="similarity">
    <text evidence="1">Belongs to the bacterial ribosomal protein bL32 family.</text>
</comment>
<organism>
    <name type="scientific">Acinetobacter baumannii (strain ACICU)</name>
    <dbReference type="NCBI Taxonomy" id="405416"/>
    <lineage>
        <taxon>Bacteria</taxon>
        <taxon>Pseudomonadati</taxon>
        <taxon>Pseudomonadota</taxon>
        <taxon>Gammaproteobacteria</taxon>
        <taxon>Moraxellales</taxon>
        <taxon>Moraxellaceae</taxon>
        <taxon>Acinetobacter</taxon>
        <taxon>Acinetobacter calcoaceticus/baumannii complex</taxon>
    </lineage>
</organism>
<sequence length="61" mass="7080">MAVQQNRKSRSRRDMRRSHDALTENALTVDQATGETHRRHHVTKDGFYRGRQLFAKAADAE</sequence>
<dbReference type="EMBL" id="CP000863">
    <property type="protein sequence ID" value="ACC56086.1"/>
    <property type="molecule type" value="Genomic_DNA"/>
</dbReference>
<dbReference type="RefSeq" id="WP_000290730.1">
    <property type="nucleotide sequence ID" value="NZ_CP031380.1"/>
</dbReference>
<dbReference type="SMR" id="B2HUL1"/>
<dbReference type="GeneID" id="9383546"/>
<dbReference type="KEGG" id="abc:ACICU_00774"/>
<dbReference type="HOGENOM" id="CLU_129084_2_1_6"/>
<dbReference type="Proteomes" id="UP000008839">
    <property type="component" value="Chromosome"/>
</dbReference>
<dbReference type="GO" id="GO:0015934">
    <property type="term" value="C:large ribosomal subunit"/>
    <property type="evidence" value="ECO:0007669"/>
    <property type="project" value="InterPro"/>
</dbReference>
<dbReference type="GO" id="GO:0003735">
    <property type="term" value="F:structural constituent of ribosome"/>
    <property type="evidence" value="ECO:0007669"/>
    <property type="project" value="InterPro"/>
</dbReference>
<dbReference type="GO" id="GO:0006412">
    <property type="term" value="P:translation"/>
    <property type="evidence" value="ECO:0007669"/>
    <property type="project" value="UniProtKB-UniRule"/>
</dbReference>
<dbReference type="HAMAP" id="MF_00340">
    <property type="entry name" value="Ribosomal_bL32"/>
    <property type="match status" value="1"/>
</dbReference>
<dbReference type="InterPro" id="IPR002677">
    <property type="entry name" value="Ribosomal_bL32"/>
</dbReference>
<dbReference type="InterPro" id="IPR044957">
    <property type="entry name" value="Ribosomal_bL32_bact"/>
</dbReference>
<dbReference type="InterPro" id="IPR011332">
    <property type="entry name" value="Ribosomal_zn-bd"/>
</dbReference>
<dbReference type="NCBIfam" id="TIGR01031">
    <property type="entry name" value="rpmF_bact"/>
    <property type="match status" value="1"/>
</dbReference>
<dbReference type="PANTHER" id="PTHR35534">
    <property type="entry name" value="50S RIBOSOMAL PROTEIN L32"/>
    <property type="match status" value="1"/>
</dbReference>
<dbReference type="PANTHER" id="PTHR35534:SF1">
    <property type="entry name" value="LARGE RIBOSOMAL SUBUNIT PROTEIN BL32"/>
    <property type="match status" value="1"/>
</dbReference>
<dbReference type="Pfam" id="PF01783">
    <property type="entry name" value="Ribosomal_L32p"/>
    <property type="match status" value="1"/>
</dbReference>
<dbReference type="SUPFAM" id="SSF57829">
    <property type="entry name" value="Zn-binding ribosomal proteins"/>
    <property type="match status" value="1"/>
</dbReference>
<reference key="1">
    <citation type="journal article" date="2008" name="Antimicrob. Agents Chemother.">
        <title>Whole-genome pyrosequencing of an epidemic multidrug-resistant Acinetobacter baumannii strain belonging to the European clone II group.</title>
        <authorList>
            <person name="Iacono M."/>
            <person name="Villa L."/>
            <person name="Fortini D."/>
            <person name="Bordoni R."/>
            <person name="Imperi F."/>
            <person name="Bonnal R.J."/>
            <person name="Sicheritz-Ponten T."/>
            <person name="De Bellis G."/>
            <person name="Visca P."/>
            <person name="Cassone A."/>
            <person name="Carattoli A."/>
        </authorList>
    </citation>
    <scope>NUCLEOTIDE SEQUENCE [LARGE SCALE GENOMIC DNA]</scope>
    <source>
        <strain>ACICU</strain>
    </source>
</reference>